<proteinExistence type="inferred from homology"/>
<sequence>MRLPIFLDTDPGIDDAVAIAAAIFAPELDLQLMTTVAGNVSVEKTTRNALQLLHFWNAEIPLAQGAAVPLVRAPRDAASVHGESGMAGYDFVEHNRKPLGIPAFLAIRDALMRAPEPVTLVAIGPLTNIALLLSQCPECKPYIRRLVIMGGSAGRGNCTPNAEFNIAADPEAAACVFRSGIEIVMCGLDVTNQAILTPDYLATLPELNRTGKMLHALFSHYRSGSMQSGLRMHDLCAIAWLVRPDLFTLKPCFVAVETQGEFTSGTTVVDIDGCLGKPANVKVALDLDVKGFQQWVAEVLALAS</sequence>
<protein>
    <recommendedName>
        <fullName evidence="1">Non-specific ribonucleoside hydrolase RihC</fullName>
        <ecNumber evidence="1">3.2.-.-</ecNumber>
    </recommendedName>
    <alternativeName>
        <fullName evidence="1">Purine/pyrimidine ribonucleoside hydrolase</fullName>
    </alternativeName>
</protein>
<feature type="chain" id="PRO_1000068530" description="Non-specific ribonucleoside hydrolase RihC">
    <location>
        <begin position="1"/>
        <end position="304"/>
    </location>
</feature>
<feature type="active site" evidence="1">
    <location>
        <position position="233"/>
    </location>
</feature>
<keyword id="KW-0326">Glycosidase</keyword>
<keyword id="KW-0378">Hydrolase</keyword>
<evidence type="ECO:0000255" key="1">
    <source>
        <dbReference type="HAMAP-Rule" id="MF_01432"/>
    </source>
</evidence>
<name>RIHC_ECOHS</name>
<accession>A7ZVX8</accession>
<dbReference type="EC" id="3.2.-.-" evidence="1"/>
<dbReference type="EMBL" id="CP000802">
    <property type="protein sequence ID" value="ABV04432.1"/>
    <property type="molecule type" value="Genomic_DNA"/>
</dbReference>
<dbReference type="RefSeq" id="WP_001239133.1">
    <property type="nucleotide sequence ID" value="NC_009800.1"/>
</dbReference>
<dbReference type="SMR" id="A7ZVX8"/>
<dbReference type="KEGG" id="ecx:EcHS_A0032"/>
<dbReference type="HOGENOM" id="CLU_036838_2_2_6"/>
<dbReference type="GO" id="GO:0005829">
    <property type="term" value="C:cytosol"/>
    <property type="evidence" value="ECO:0007669"/>
    <property type="project" value="TreeGrafter"/>
</dbReference>
<dbReference type="GO" id="GO:0008477">
    <property type="term" value="F:purine nucleosidase activity"/>
    <property type="evidence" value="ECO:0007669"/>
    <property type="project" value="TreeGrafter"/>
</dbReference>
<dbReference type="GO" id="GO:0045437">
    <property type="term" value="F:uridine nucleosidase activity"/>
    <property type="evidence" value="ECO:0007669"/>
    <property type="project" value="UniProtKB-ARBA"/>
</dbReference>
<dbReference type="GO" id="GO:0006144">
    <property type="term" value="P:purine nucleobase metabolic process"/>
    <property type="evidence" value="ECO:0007669"/>
    <property type="project" value="UniProtKB-UniRule"/>
</dbReference>
<dbReference type="GO" id="GO:0006152">
    <property type="term" value="P:purine nucleoside catabolic process"/>
    <property type="evidence" value="ECO:0007669"/>
    <property type="project" value="TreeGrafter"/>
</dbReference>
<dbReference type="GO" id="GO:0006206">
    <property type="term" value="P:pyrimidine nucleobase metabolic process"/>
    <property type="evidence" value="ECO:0007669"/>
    <property type="project" value="UniProtKB-UniRule"/>
</dbReference>
<dbReference type="CDD" id="cd02651">
    <property type="entry name" value="nuc_hydro_IU_UC_XIUA"/>
    <property type="match status" value="1"/>
</dbReference>
<dbReference type="FunFam" id="3.90.245.10:FF:000002">
    <property type="entry name" value="Non-specific ribonucleoside hydrolase RihC"/>
    <property type="match status" value="1"/>
</dbReference>
<dbReference type="Gene3D" id="3.90.245.10">
    <property type="entry name" value="Ribonucleoside hydrolase-like"/>
    <property type="match status" value="1"/>
</dbReference>
<dbReference type="HAMAP" id="MF_01432">
    <property type="entry name" value="Nucleosid_hydro_RihC"/>
    <property type="match status" value="1"/>
</dbReference>
<dbReference type="InterPro" id="IPR015910">
    <property type="entry name" value="I/U_nuclsd_hydro_CS"/>
</dbReference>
<dbReference type="InterPro" id="IPR001910">
    <property type="entry name" value="Inosine/uridine_hydrolase_dom"/>
</dbReference>
<dbReference type="InterPro" id="IPR023186">
    <property type="entry name" value="IUNH"/>
</dbReference>
<dbReference type="InterPro" id="IPR022976">
    <property type="entry name" value="Nucleosid_hydro_RihC_nonspecif"/>
</dbReference>
<dbReference type="InterPro" id="IPR036452">
    <property type="entry name" value="Ribo_hydro-like"/>
</dbReference>
<dbReference type="NCBIfam" id="NF008036">
    <property type="entry name" value="PRK10768.1"/>
    <property type="match status" value="1"/>
</dbReference>
<dbReference type="PANTHER" id="PTHR12304">
    <property type="entry name" value="INOSINE-URIDINE PREFERRING NUCLEOSIDE HYDROLASE"/>
    <property type="match status" value="1"/>
</dbReference>
<dbReference type="PANTHER" id="PTHR12304:SF15">
    <property type="entry name" value="NON-SPECIFIC RIBONUCLEOSIDE HYDROLASE RIHC"/>
    <property type="match status" value="1"/>
</dbReference>
<dbReference type="Pfam" id="PF01156">
    <property type="entry name" value="IU_nuc_hydro"/>
    <property type="match status" value="1"/>
</dbReference>
<dbReference type="SUPFAM" id="SSF53590">
    <property type="entry name" value="Nucleoside hydrolase"/>
    <property type="match status" value="1"/>
</dbReference>
<dbReference type="PROSITE" id="PS01247">
    <property type="entry name" value="IUNH"/>
    <property type="match status" value="1"/>
</dbReference>
<reference key="1">
    <citation type="journal article" date="2008" name="J. Bacteriol.">
        <title>The pangenome structure of Escherichia coli: comparative genomic analysis of E. coli commensal and pathogenic isolates.</title>
        <authorList>
            <person name="Rasko D.A."/>
            <person name="Rosovitz M.J."/>
            <person name="Myers G.S.A."/>
            <person name="Mongodin E.F."/>
            <person name="Fricke W.F."/>
            <person name="Gajer P."/>
            <person name="Crabtree J."/>
            <person name="Sebaihia M."/>
            <person name="Thomson N.R."/>
            <person name="Chaudhuri R."/>
            <person name="Henderson I.R."/>
            <person name="Sperandio V."/>
            <person name="Ravel J."/>
        </authorList>
    </citation>
    <scope>NUCLEOTIDE SEQUENCE [LARGE SCALE GENOMIC DNA]</scope>
    <source>
        <strain>HS</strain>
    </source>
</reference>
<comment type="function">
    <text evidence="1">Hydrolyzes both purine and pyrimidine ribonucleosides with a broad-substrate specificity.</text>
</comment>
<comment type="similarity">
    <text evidence="1">Belongs to the IUNH family. RihC subfamily.</text>
</comment>
<organism>
    <name type="scientific">Escherichia coli O9:H4 (strain HS)</name>
    <dbReference type="NCBI Taxonomy" id="331112"/>
    <lineage>
        <taxon>Bacteria</taxon>
        <taxon>Pseudomonadati</taxon>
        <taxon>Pseudomonadota</taxon>
        <taxon>Gammaproteobacteria</taxon>
        <taxon>Enterobacterales</taxon>
        <taxon>Enterobacteriaceae</taxon>
        <taxon>Escherichia</taxon>
    </lineage>
</organism>
<gene>
    <name evidence="1" type="primary">rihC</name>
    <name type="ordered locus">EcHS_A0032</name>
</gene>